<protein>
    <recommendedName>
        <fullName>Putative insulin-like peptide beta-type 6</fullName>
    </recommendedName>
</protein>
<comment type="subcellular location">
    <subcellularLocation>
        <location evidence="3">Secreted</location>
    </subcellularLocation>
</comment>
<comment type="similarity">
    <text evidence="3">Belongs to the insulin family.</text>
</comment>
<keyword id="KW-1015">Disulfide bond</keyword>
<keyword id="KW-1185">Reference proteome</keyword>
<keyword id="KW-0964">Secreted</keyword>
<keyword id="KW-0732">Signal</keyword>
<gene>
    <name type="primary">ins-5</name>
    <name type="ORF">ZK84.3</name>
</gene>
<organism>
    <name type="scientific">Caenorhabditis elegans</name>
    <dbReference type="NCBI Taxonomy" id="6239"/>
    <lineage>
        <taxon>Eukaryota</taxon>
        <taxon>Metazoa</taxon>
        <taxon>Ecdysozoa</taxon>
        <taxon>Nematoda</taxon>
        <taxon>Chromadorea</taxon>
        <taxon>Rhabditida</taxon>
        <taxon>Rhabditina</taxon>
        <taxon>Rhabditomorpha</taxon>
        <taxon>Rhabditoidea</taxon>
        <taxon>Rhabditidae</taxon>
        <taxon>Peloderinae</taxon>
        <taxon>Caenorhabditis</taxon>
    </lineage>
</organism>
<dbReference type="EMBL" id="FO081688">
    <property type="protein sequence ID" value="CCD73332.1"/>
    <property type="molecule type" value="Genomic_DNA"/>
</dbReference>
<dbReference type="PIR" id="T29013">
    <property type="entry name" value="T29013"/>
</dbReference>
<dbReference type="RefSeq" id="NP_001380038.1">
    <property type="nucleotide sequence ID" value="NM_001393089.1"/>
</dbReference>
<dbReference type="RefSeq" id="NP_495197.4">
    <property type="nucleotide sequence ID" value="NM_062796.4"/>
</dbReference>
<dbReference type="SMR" id="P56173"/>
<dbReference type="STRING" id="6239.ZK84.3.1"/>
<dbReference type="PaxDb" id="6239-ZK84.3"/>
<dbReference type="EnsemblMetazoa" id="ZK84.3.1">
    <property type="protein sequence ID" value="ZK84.3.1"/>
    <property type="gene ID" value="WBGene00002088"/>
</dbReference>
<dbReference type="EnsemblMetazoa" id="ZK84.3.2">
    <property type="protein sequence ID" value="ZK84.3.2"/>
    <property type="gene ID" value="WBGene00002088"/>
</dbReference>
<dbReference type="GeneID" id="191686"/>
<dbReference type="UCSC" id="ZK84.3">
    <property type="organism name" value="c. elegans"/>
</dbReference>
<dbReference type="AGR" id="WB:WBGene00002088"/>
<dbReference type="WormBase" id="ZK84.3">
    <property type="protein sequence ID" value="CE44931"/>
    <property type="gene ID" value="WBGene00002088"/>
    <property type="gene designation" value="ins-5"/>
</dbReference>
<dbReference type="GeneTree" id="ENSGT00970000196018"/>
<dbReference type="HOGENOM" id="CLU_2308569_0_0_1"/>
<dbReference type="InParanoid" id="P56173"/>
<dbReference type="OrthoDB" id="5824650at2759"/>
<dbReference type="PhylomeDB" id="P56173"/>
<dbReference type="PRO" id="PR:P56173"/>
<dbReference type="Proteomes" id="UP000001940">
    <property type="component" value="Chromosome II"/>
</dbReference>
<dbReference type="Bgee" id="WBGene00002088">
    <property type="expression patterns" value="Expressed in larva and 2 other cell types or tissues"/>
</dbReference>
<dbReference type="GO" id="GO:0005576">
    <property type="term" value="C:extracellular region"/>
    <property type="evidence" value="ECO:0007669"/>
    <property type="project" value="UniProtKB-SubCell"/>
</dbReference>
<dbReference type="GO" id="GO:0005179">
    <property type="term" value="F:hormone activity"/>
    <property type="evidence" value="ECO:0007669"/>
    <property type="project" value="InterPro"/>
</dbReference>
<dbReference type="GO" id="GO:0040024">
    <property type="term" value="P:dauer larval development"/>
    <property type="evidence" value="ECO:0000316"/>
    <property type="project" value="UniProtKB"/>
</dbReference>
<dbReference type="FunFam" id="1.10.100.10:FF:000006">
    <property type="entry name" value="Probable insulin-like peptide beta-type 4"/>
    <property type="match status" value="1"/>
</dbReference>
<dbReference type="Gene3D" id="1.10.100.10">
    <property type="entry name" value="Insulin-like"/>
    <property type="match status" value="1"/>
</dbReference>
<dbReference type="InterPro" id="IPR052335">
    <property type="entry name" value="Insulin-like_regulatory"/>
</dbReference>
<dbReference type="InterPro" id="IPR036438">
    <property type="entry name" value="Insulin-like_sf"/>
</dbReference>
<dbReference type="InterPro" id="IPR022353">
    <property type="entry name" value="Insulin_CS"/>
</dbReference>
<dbReference type="InterPro" id="IPR003235">
    <property type="entry name" value="Nem_insulin-like_b-type"/>
</dbReference>
<dbReference type="PANTHER" id="PTHR33893:SF9">
    <property type="entry name" value="INSULIN RELATED-RELATED"/>
    <property type="match status" value="1"/>
</dbReference>
<dbReference type="PANTHER" id="PTHR33893">
    <property type="entry name" value="INSULIN RELATED-RELATED-RELATED"/>
    <property type="match status" value="1"/>
</dbReference>
<dbReference type="Pfam" id="PF03488">
    <property type="entry name" value="Ins_beta"/>
    <property type="match status" value="1"/>
</dbReference>
<dbReference type="SUPFAM" id="SSF56994">
    <property type="entry name" value="Insulin-like"/>
    <property type="match status" value="1"/>
</dbReference>
<dbReference type="PROSITE" id="PS00262">
    <property type="entry name" value="INSULIN"/>
    <property type="match status" value="1"/>
</dbReference>
<reference key="1">
    <citation type="journal article" date="1998" name="Science">
        <title>Genome sequence of the nematode C. elegans: a platform for investigating biology.</title>
        <authorList>
            <consortium name="The C. elegans sequencing consortium"/>
        </authorList>
    </citation>
    <scope>NUCLEOTIDE SEQUENCE [LARGE SCALE GENOMIC DNA]</scope>
    <source>
        <strain>Bristol N2</strain>
    </source>
</reference>
<reference key="2">
    <citation type="journal article" date="1998" name="Genome Res.">
        <title>New insulin-like proteins with atypical disulfide bond pattern characterized in Caenorhabditis elegans by comparative sequence analysis and homology modeling.</title>
        <authorList>
            <person name="Duret L."/>
            <person name="Guex N."/>
            <person name="Peitsch M.C."/>
            <person name="Bairoch A."/>
        </authorList>
    </citation>
    <scope>SIMILARITY TO INSULIN</scope>
</reference>
<accession>P56173</accession>
<accession>Q23631</accession>
<feature type="signal peptide" evidence="2">
    <location>
        <begin position="1"/>
        <end position="18"/>
    </location>
</feature>
<feature type="chain" id="PRO_0000221094" description="Putative insulin-like peptide beta-type 6">
    <location>
        <begin position="19"/>
        <end position="100"/>
    </location>
</feature>
<feature type="disulfide bond" evidence="1">
    <location>
        <begin position="54"/>
        <end position="83"/>
    </location>
</feature>
<feature type="disulfide bond" evidence="1">
    <location>
        <begin position="66"/>
        <end position="96"/>
    </location>
</feature>
<feature type="disulfide bond" evidence="1">
    <location>
        <begin position="70"/>
        <end position="97"/>
    </location>
</feature>
<feature type="disulfide bond" evidence="1">
    <location>
        <begin position="82"/>
        <end position="87"/>
    </location>
</feature>
<name>ILB6_CAEEL</name>
<proteinExistence type="inferred from homology"/>
<sequence>MHSIVALMLIGTILPIAALHQKHQGFILSSSDSTGNQPMDAISRADRHTNYRSCALRLIPHVWSVCGDACQPQNGIDVAQKCCSTDCSSDYIKEICCPFD</sequence>
<evidence type="ECO:0000250" key="1"/>
<evidence type="ECO:0000255" key="2"/>
<evidence type="ECO:0000305" key="3"/>